<accession>B2JCH8</accession>
<gene>
    <name evidence="1" type="primary">glgC</name>
    <name type="ordered locus">Bphy_1797</name>
</gene>
<name>GLGC_PARP8</name>
<feature type="chain" id="PRO_1000130468" description="Glucose-1-phosphate adenylyltransferase">
    <location>
        <begin position="1"/>
        <end position="422"/>
    </location>
</feature>
<feature type="binding site" evidence="1">
    <location>
        <position position="108"/>
    </location>
    <ligand>
        <name>alpha-D-glucose 1-phosphate</name>
        <dbReference type="ChEBI" id="CHEBI:58601"/>
    </ligand>
</feature>
<feature type="binding site" evidence="1">
    <location>
        <position position="173"/>
    </location>
    <ligand>
        <name>alpha-D-glucose 1-phosphate</name>
        <dbReference type="ChEBI" id="CHEBI:58601"/>
    </ligand>
</feature>
<feature type="binding site" evidence="1">
    <location>
        <begin position="188"/>
        <end position="189"/>
    </location>
    <ligand>
        <name>alpha-D-glucose 1-phosphate</name>
        <dbReference type="ChEBI" id="CHEBI:58601"/>
    </ligand>
</feature>
<feature type="binding site" evidence="1">
    <location>
        <position position="206"/>
    </location>
    <ligand>
        <name>alpha-D-glucose 1-phosphate</name>
        <dbReference type="ChEBI" id="CHEBI:58601"/>
    </ligand>
</feature>
<organism>
    <name type="scientific">Paraburkholderia phymatum (strain DSM 17167 / CIP 108236 / LMG 21445 / STM815)</name>
    <name type="common">Burkholderia phymatum</name>
    <dbReference type="NCBI Taxonomy" id="391038"/>
    <lineage>
        <taxon>Bacteria</taxon>
        <taxon>Pseudomonadati</taxon>
        <taxon>Pseudomonadota</taxon>
        <taxon>Betaproteobacteria</taxon>
        <taxon>Burkholderiales</taxon>
        <taxon>Burkholderiaceae</taxon>
        <taxon>Paraburkholderia</taxon>
    </lineage>
</organism>
<sequence length="422" mass="46582">MDTPASLNDLQHTTLAIVLAGGRGTRLGPLTNKRVKPAVHFGGKYRIIDFALSNCLNSGIRRIAVVTQYKAHSLLRHVQRGWGFLRGEFNEFIDLWPAQQRVEGAHWYRGTADAVFQNLDIIRSIRPKYVVVLAGDHIYKMDYTRMVMDHVESKADCTVGCIEVPRMEAVAFGVMHVDEERRVTGFVEKPADPPAMPGHPDIALASMGIYVFNADYLYSLLEDNITSVATDHDFGKDIIPRVVTSGNAIAHPFSMSCVSSDPSVEPYWRDVGTIDAYWAANLDLASTIPSLDLYDRNWPIWTHQEQLPPAKFVRDLNGLQGTGTNMIVCGGCVISGSQISRSVLSSNVVVNSFCNIAEAVLLPQVSIGASCRLRKVVIDRGCHIPDGTVIGEDPVRDGERFYRTDSGVVLVTAEALKRQTAR</sequence>
<keyword id="KW-0067">ATP-binding</keyword>
<keyword id="KW-0119">Carbohydrate metabolism</keyword>
<keyword id="KW-0320">Glycogen biosynthesis</keyword>
<keyword id="KW-0321">Glycogen metabolism</keyword>
<keyword id="KW-0547">Nucleotide-binding</keyword>
<keyword id="KW-0548">Nucleotidyltransferase</keyword>
<keyword id="KW-1185">Reference proteome</keyword>
<keyword id="KW-0808">Transferase</keyword>
<reference key="1">
    <citation type="journal article" date="2014" name="Stand. Genomic Sci.">
        <title>Complete genome sequence of Burkholderia phymatum STM815(T), a broad host range and efficient nitrogen-fixing symbiont of Mimosa species.</title>
        <authorList>
            <person name="Moulin L."/>
            <person name="Klonowska A."/>
            <person name="Caroline B."/>
            <person name="Booth K."/>
            <person name="Vriezen J.A."/>
            <person name="Melkonian R."/>
            <person name="James E.K."/>
            <person name="Young J.P."/>
            <person name="Bena G."/>
            <person name="Hauser L."/>
            <person name="Land M."/>
            <person name="Kyrpides N."/>
            <person name="Bruce D."/>
            <person name="Chain P."/>
            <person name="Copeland A."/>
            <person name="Pitluck S."/>
            <person name="Woyke T."/>
            <person name="Lizotte-Waniewski M."/>
            <person name="Bristow J."/>
            <person name="Riley M."/>
        </authorList>
    </citation>
    <scope>NUCLEOTIDE SEQUENCE [LARGE SCALE GENOMIC DNA]</scope>
    <source>
        <strain>DSM 17167 / CIP 108236 / LMG 21445 / STM815</strain>
    </source>
</reference>
<evidence type="ECO:0000255" key="1">
    <source>
        <dbReference type="HAMAP-Rule" id="MF_00624"/>
    </source>
</evidence>
<protein>
    <recommendedName>
        <fullName evidence="1">Glucose-1-phosphate adenylyltransferase</fullName>
        <ecNumber evidence="1">2.7.7.27</ecNumber>
    </recommendedName>
    <alternativeName>
        <fullName evidence="1">ADP-glucose pyrophosphorylase</fullName>
        <shortName evidence="1">ADPGlc PPase</shortName>
    </alternativeName>
    <alternativeName>
        <fullName evidence="1">ADP-glucose synthase</fullName>
    </alternativeName>
</protein>
<comment type="function">
    <text evidence="1">Involved in the biosynthesis of ADP-glucose, a building block required for the elongation reactions to produce glycogen. Catalyzes the reaction between ATP and alpha-D-glucose 1-phosphate (G1P) to produce pyrophosphate and ADP-Glc.</text>
</comment>
<comment type="catalytic activity">
    <reaction evidence="1">
        <text>alpha-D-glucose 1-phosphate + ATP + H(+) = ADP-alpha-D-glucose + diphosphate</text>
        <dbReference type="Rhea" id="RHEA:12120"/>
        <dbReference type="ChEBI" id="CHEBI:15378"/>
        <dbReference type="ChEBI" id="CHEBI:30616"/>
        <dbReference type="ChEBI" id="CHEBI:33019"/>
        <dbReference type="ChEBI" id="CHEBI:57498"/>
        <dbReference type="ChEBI" id="CHEBI:58601"/>
        <dbReference type="EC" id="2.7.7.27"/>
    </reaction>
</comment>
<comment type="pathway">
    <text evidence="1">Glycan biosynthesis; glycogen biosynthesis.</text>
</comment>
<comment type="subunit">
    <text evidence="1">Homotetramer.</text>
</comment>
<comment type="similarity">
    <text evidence="1">Belongs to the bacterial/plant glucose-1-phosphate adenylyltransferase family.</text>
</comment>
<dbReference type="EC" id="2.7.7.27" evidence="1"/>
<dbReference type="EMBL" id="CP001043">
    <property type="protein sequence ID" value="ACC70979.1"/>
    <property type="molecule type" value="Genomic_DNA"/>
</dbReference>
<dbReference type="RefSeq" id="WP_012401189.1">
    <property type="nucleotide sequence ID" value="NC_010622.1"/>
</dbReference>
<dbReference type="SMR" id="B2JCH8"/>
<dbReference type="STRING" id="391038.Bphy_1797"/>
<dbReference type="KEGG" id="bph:Bphy_1797"/>
<dbReference type="eggNOG" id="COG0448">
    <property type="taxonomic scope" value="Bacteria"/>
</dbReference>
<dbReference type="HOGENOM" id="CLU_029499_14_1_4"/>
<dbReference type="OrthoDB" id="9801810at2"/>
<dbReference type="UniPathway" id="UPA00164"/>
<dbReference type="Proteomes" id="UP000001192">
    <property type="component" value="Chromosome 1"/>
</dbReference>
<dbReference type="GO" id="GO:0005524">
    <property type="term" value="F:ATP binding"/>
    <property type="evidence" value="ECO:0007669"/>
    <property type="project" value="UniProtKB-KW"/>
</dbReference>
<dbReference type="GO" id="GO:0008878">
    <property type="term" value="F:glucose-1-phosphate adenylyltransferase activity"/>
    <property type="evidence" value="ECO:0007669"/>
    <property type="project" value="UniProtKB-UniRule"/>
</dbReference>
<dbReference type="GO" id="GO:0005978">
    <property type="term" value="P:glycogen biosynthetic process"/>
    <property type="evidence" value="ECO:0007669"/>
    <property type="project" value="UniProtKB-UniRule"/>
</dbReference>
<dbReference type="CDD" id="cd02508">
    <property type="entry name" value="ADP_Glucose_PP"/>
    <property type="match status" value="1"/>
</dbReference>
<dbReference type="CDD" id="cd04651">
    <property type="entry name" value="LbH_G1P_AT_C"/>
    <property type="match status" value="1"/>
</dbReference>
<dbReference type="FunFam" id="3.90.550.10:FF:000014">
    <property type="entry name" value="Glucose-1-phosphate adenylyltransferase"/>
    <property type="match status" value="1"/>
</dbReference>
<dbReference type="Gene3D" id="2.160.10.10">
    <property type="entry name" value="Hexapeptide repeat proteins"/>
    <property type="match status" value="1"/>
</dbReference>
<dbReference type="Gene3D" id="3.90.550.10">
    <property type="entry name" value="Spore Coat Polysaccharide Biosynthesis Protein SpsA, Chain A"/>
    <property type="match status" value="1"/>
</dbReference>
<dbReference type="HAMAP" id="MF_00624">
    <property type="entry name" value="GlgC"/>
    <property type="match status" value="1"/>
</dbReference>
<dbReference type="InterPro" id="IPR011831">
    <property type="entry name" value="ADP-Glc_PPase"/>
</dbReference>
<dbReference type="InterPro" id="IPR005836">
    <property type="entry name" value="ADP_Glu_pyroP_CS"/>
</dbReference>
<dbReference type="InterPro" id="IPR023049">
    <property type="entry name" value="GlgC_bac"/>
</dbReference>
<dbReference type="InterPro" id="IPR056818">
    <property type="entry name" value="GlmU/GlgC-like_hexapep"/>
</dbReference>
<dbReference type="InterPro" id="IPR005835">
    <property type="entry name" value="NTP_transferase_dom"/>
</dbReference>
<dbReference type="InterPro" id="IPR029044">
    <property type="entry name" value="Nucleotide-diphossugar_trans"/>
</dbReference>
<dbReference type="InterPro" id="IPR011004">
    <property type="entry name" value="Trimer_LpxA-like_sf"/>
</dbReference>
<dbReference type="NCBIfam" id="TIGR02091">
    <property type="entry name" value="glgC"/>
    <property type="match status" value="1"/>
</dbReference>
<dbReference type="NCBIfam" id="NF001947">
    <property type="entry name" value="PRK00725.1"/>
    <property type="match status" value="1"/>
</dbReference>
<dbReference type="NCBIfam" id="NF002023">
    <property type="entry name" value="PRK00844.1"/>
    <property type="match status" value="1"/>
</dbReference>
<dbReference type="PANTHER" id="PTHR43523:SF2">
    <property type="entry name" value="GLUCOSE-1-PHOSPHATE ADENYLYLTRANSFERASE"/>
    <property type="match status" value="1"/>
</dbReference>
<dbReference type="PANTHER" id="PTHR43523">
    <property type="entry name" value="GLUCOSE-1-PHOSPHATE ADENYLYLTRANSFERASE-RELATED"/>
    <property type="match status" value="1"/>
</dbReference>
<dbReference type="Pfam" id="PF24894">
    <property type="entry name" value="Hexapep_GlmU"/>
    <property type="match status" value="1"/>
</dbReference>
<dbReference type="Pfam" id="PF00483">
    <property type="entry name" value="NTP_transferase"/>
    <property type="match status" value="1"/>
</dbReference>
<dbReference type="SUPFAM" id="SSF53448">
    <property type="entry name" value="Nucleotide-diphospho-sugar transferases"/>
    <property type="match status" value="1"/>
</dbReference>
<dbReference type="SUPFAM" id="SSF51161">
    <property type="entry name" value="Trimeric LpxA-like enzymes"/>
    <property type="match status" value="1"/>
</dbReference>
<dbReference type="PROSITE" id="PS00809">
    <property type="entry name" value="ADP_GLC_PYROPHOSPH_2"/>
    <property type="match status" value="1"/>
</dbReference>
<dbReference type="PROSITE" id="PS00810">
    <property type="entry name" value="ADP_GLC_PYROPHOSPH_3"/>
    <property type="match status" value="1"/>
</dbReference>
<proteinExistence type="inferred from homology"/>